<dbReference type="EC" id="1.2.1.41" evidence="1"/>
<dbReference type="EMBL" id="CP000555">
    <property type="protein sequence ID" value="ABM93231.1"/>
    <property type="molecule type" value="Genomic_DNA"/>
</dbReference>
<dbReference type="RefSeq" id="WP_011827870.1">
    <property type="nucleotide sequence ID" value="NC_008825.1"/>
</dbReference>
<dbReference type="SMR" id="A2SCE2"/>
<dbReference type="STRING" id="420662.Mpe_A0269"/>
<dbReference type="KEGG" id="mpt:Mpe_A0269"/>
<dbReference type="eggNOG" id="COG0014">
    <property type="taxonomic scope" value="Bacteria"/>
</dbReference>
<dbReference type="HOGENOM" id="CLU_030231_0_0_4"/>
<dbReference type="UniPathway" id="UPA00098">
    <property type="reaction ID" value="UER00360"/>
</dbReference>
<dbReference type="Proteomes" id="UP000000366">
    <property type="component" value="Chromosome"/>
</dbReference>
<dbReference type="GO" id="GO:0005737">
    <property type="term" value="C:cytoplasm"/>
    <property type="evidence" value="ECO:0007669"/>
    <property type="project" value="UniProtKB-SubCell"/>
</dbReference>
<dbReference type="GO" id="GO:0004350">
    <property type="term" value="F:glutamate-5-semialdehyde dehydrogenase activity"/>
    <property type="evidence" value="ECO:0007669"/>
    <property type="project" value="UniProtKB-UniRule"/>
</dbReference>
<dbReference type="GO" id="GO:0050661">
    <property type="term" value="F:NADP binding"/>
    <property type="evidence" value="ECO:0007669"/>
    <property type="project" value="InterPro"/>
</dbReference>
<dbReference type="GO" id="GO:0055129">
    <property type="term" value="P:L-proline biosynthetic process"/>
    <property type="evidence" value="ECO:0007669"/>
    <property type="project" value="UniProtKB-UniRule"/>
</dbReference>
<dbReference type="CDD" id="cd07079">
    <property type="entry name" value="ALDH_F18-19_ProA-GPR"/>
    <property type="match status" value="1"/>
</dbReference>
<dbReference type="FunFam" id="3.40.309.10:FF:000006">
    <property type="entry name" value="Gamma-glutamyl phosphate reductase"/>
    <property type="match status" value="1"/>
</dbReference>
<dbReference type="Gene3D" id="3.40.605.10">
    <property type="entry name" value="Aldehyde Dehydrogenase, Chain A, domain 1"/>
    <property type="match status" value="1"/>
</dbReference>
<dbReference type="Gene3D" id="3.40.309.10">
    <property type="entry name" value="Aldehyde Dehydrogenase, Chain A, domain 2"/>
    <property type="match status" value="1"/>
</dbReference>
<dbReference type="HAMAP" id="MF_00412">
    <property type="entry name" value="ProA"/>
    <property type="match status" value="1"/>
</dbReference>
<dbReference type="InterPro" id="IPR016161">
    <property type="entry name" value="Ald_DH/histidinol_DH"/>
</dbReference>
<dbReference type="InterPro" id="IPR016163">
    <property type="entry name" value="Ald_DH_C"/>
</dbReference>
<dbReference type="InterPro" id="IPR016162">
    <property type="entry name" value="Ald_DH_N"/>
</dbReference>
<dbReference type="InterPro" id="IPR015590">
    <property type="entry name" value="Aldehyde_DH_dom"/>
</dbReference>
<dbReference type="InterPro" id="IPR012134">
    <property type="entry name" value="Glu-5-SA_DH"/>
</dbReference>
<dbReference type="InterPro" id="IPR000965">
    <property type="entry name" value="GPR_dom"/>
</dbReference>
<dbReference type="NCBIfam" id="NF001221">
    <property type="entry name" value="PRK00197.1"/>
    <property type="match status" value="1"/>
</dbReference>
<dbReference type="NCBIfam" id="TIGR00407">
    <property type="entry name" value="proA"/>
    <property type="match status" value="1"/>
</dbReference>
<dbReference type="PANTHER" id="PTHR11063:SF8">
    <property type="entry name" value="DELTA-1-PYRROLINE-5-CARBOXYLATE SYNTHASE"/>
    <property type="match status" value="1"/>
</dbReference>
<dbReference type="PANTHER" id="PTHR11063">
    <property type="entry name" value="GLUTAMATE SEMIALDEHYDE DEHYDROGENASE"/>
    <property type="match status" value="1"/>
</dbReference>
<dbReference type="Pfam" id="PF00171">
    <property type="entry name" value="Aldedh"/>
    <property type="match status" value="2"/>
</dbReference>
<dbReference type="PIRSF" id="PIRSF000151">
    <property type="entry name" value="GPR"/>
    <property type="match status" value="1"/>
</dbReference>
<dbReference type="SUPFAM" id="SSF53720">
    <property type="entry name" value="ALDH-like"/>
    <property type="match status" value="1"/>
</dbReference>
<reference key="1">
    <citation type="journal article" date="2007" name="J. Bacteriol.">
        <title>Whole-genome analysis of the methyl tert-butyl ether-degrading beta-proteobacterium Methylibium petroleiphilum PM1.</title>
        <authorList>
            <person name="Kane S.R."/>
            <person name="Chakicherla A.Y."/>
            <person name="Chain P.S.G."/>
            <person name="Schmidt R."/>
            <person name="Shin M.W."/>
            <person name="Legler T.C."/>
            <person name="Scow K.M."/>
            <person name="Larimer F.W."/>
            <person name="Lucas S.M."/>
            <person name="Richardson P.M."/>
            <person name="Hristova K.R."/>
        </authorList>
    </citation>
    <scope>NUCLEOTIDE SEQUENCE [LARGE SCALE GENOMIC DNA]</scope>
    <source>
        <strain>ATCC BAA-1232 / LMG 22953 / PM1</strain>
    </source>
</reference>
<evidence type="ECO:0000255" key="1">
    <source>
        <dbReference type="HAMAP-Rule" id="MF_00412"/>
    </source>
</evidence>
<name>PROA_METPP</name>
<proteinExistence type="inferred from homology"/>
<accession>A2SCE2</accession>
<keyword id="KW-0028">Amino-acid biosynthesis</keyword>
<keyword id="KW-0963">Cytoplasm</keyword>
<keyword id="KW-0521">NADP</keyword>
<keyword id="KW-0560">Oxidoreductase</keyword>
<keyword id="KW-0641">Proline biosynthesis</keyword>
<keyword id="KW-1185">Reference proteome</keyword>
<organism>
    <name type="scientific">Methylibium petroleiphilum (strain ATCC BAA-1232 / LMG 22953 / PM1)</name>
    <dbReference type="NCBI Taxonomy" id="420662"/>
    <lineage>
        <taxon>Bacteria</taxon>
        <taxon>Pseudomonadati</taxon>
        <taxon>Pseudomonadota</taxon>
        <taxon>Betaproteobacteria</taxon>
        <taxon>Burkholderiales</taxon>
        <taxon>Sphaerotilaceae</taxon>
        <taxon>Methylibium</taxon>
    </lineage>
</organism>
<feature type="chain" id="PRO_0000340893" description="Gamma-glutamyl phosphate reductase">
    <location>
        <begin position="1"/>
        <end position="429"/>
    </location>
</feature>
<sequence>MNAPDATPVIALMDRLGSAARSASTAMAAASTAAKNAALLALAREIRAGAARLAAENARDLDVATRAGLAAPMVDRLRLTDKVIALMAEGCEQVAALPDPIGEMTNLRRRPSGITVGQMRVPLGVFGMVYESRPNVTIDAASLAIKSGNAAILRGGSEALHSNTALMALVVRALAEAGLPGDAVQLVPTTDRAAVGRLIAMPQYVDVIIPRGGKGLIERIAAEATVPVIKHLDGNCHVYVDAGADLDLAVRVTDNAKTQKYSPCNAAESLLVHRDVAAAFLPRIGAVFAAKGVEMRCGPRAKALLAAVPGAKLVDATEADWAEEYLAPVISIKLVDSLDEAIARINRYGSHHTDAILTTNHPNAMRFLREVDSASVMVNASTRFADGFEFGLGAEIGISTDKFHARGPVGLEGLTSMKWVVFGQGEVRT</sequence>
<protein>
    <recommendedName>
        <fullName evidence="1">Gamma-glutamyl phosphate reductase</fullName>
        <shortName evidence="1">GPR</shortName>
        <ecNumber evidence="1">1.2.1.41</ecNumber>
    </recommendedName>
    <alternativeName>
        <fullName evidence="1">Glutamate-5-semialdehyde dehydrogenase</fullName>
    </alternativeName>
    <alternativeName>
        <fullName evidence="1">Glutamyl-gamma-semialdehyde dehydrogenase</fullName>
        <shortName evidence="1">GSA dehydrogenase</shortName>
    </alternativeName>
</protein>
<gene>
    <name evidence="1" type="primary">proA</name>
    <name type="ordered locus">Mpe_A0269</name>
</gene>
<comment type="function">
    <text evidence="1">Catalyzes the NADPH-dependent reduction of L-glutamate 5-phosphate into L-glutamate 5-semialdehyde and phosphate. The product spontaneously undergoes cyclization to form 1-pyrroline-5-carboxylate.</text>
</comment>
<comment type="catalytic activity">
    <reaction evidence="1">
        <text>L-glutamate 5-semialdehyde + phosphate + NADP(+) = L-glutamyl 5-phosphate + NADPH + H(+)</text>
        <dbReference type="Rhea" id="RHEA:19541"/>
        <dbReference type="ChEBI" id="CHEBI:15378"/>
        <dbReference type="ChEBI" id="CHEBI:43474"/>
        <dbReference type="ChEBI" id="CHEBI:57783"/>
        <dbReference type="ChEBI" id="CHEBI:58066"/>
        <dbReference type="ChEBI" id="CHEBI:58274"/>
        <dbReference type="ChEBI" id="CHEBI:58349"/>
        <dbReference type="EC" id="1.2.1.41"/>
    </reaction>
</comment>
<comment type="pathway">
    <text evidence="1">Amino-acid biosynthesis; L-proline biosynthesis; L-glutamate 5-semialdehyde from L-glutamate: step 2/2.</text>
</comment>
<comment type="subcellular location">
    <subcellularLocation>
        <location evidence="1">Cytoplasm</location>
    </subcellularLocation>
</comment>
<comment type="similarity">
    <text evidence="1">Belongs to the gamma-glutamyl phosphate reductase family.</text>
</comment>